<proteinExistence type="predicted"/>
<organismHost>
    <name type="scientific">Escherichia coli</name>
    <dbReference type="NCBI Taxonomy" id="562"/>
</organismHost>
<sequence>MAITEVFTHKQPLGNSDPAHTAYGPGELTASTPAMTPLMLDATSGKLTVWDGAHAGAATGILAVTADQNSAELAFYKSGSFRIEDVLWPSAVTDENIKRNAFAGTAISIV</sequence>
<keyword id="KW-1232">Capsid decoration protein</keyword>
<keyword id="KW-0167">Capsid protein</keyword>
<keyword id="KW-0426">Late protein</keyword>
<keyword id="KW-1185">Reference proteome</keyword>
<keyword id="KW-0946">Virion</keyword>
<accession>O64321</accession>
<evidence type="ECO:0000256" key="1">
    <source>
        <dbReference type="SAM" id="MobiDB-lite"/>
    </source>
</evidence>
<evidence type="ECO:0000305" key="2"/>
<evidence type="ECO:0000312" key="3">
    <source>
        <dbReference type="EMBL" id="AAC19043.1"/>
    </source>
</evidence>
<evidence type="ECO:0000312" key="4">
    <source>
        <dbReference type="Proteomes" id="UP000002132"/>
    </source>
</evidence>
<gene>
    <name evidence="3" type="primary">gene 7</name>
</gene>
<reference key="1">
    <citation type="journal article" date="2000" name="J. Mol. Biol.">
        <title>Genomic sequence and analysis of the atypical temperate bacteriophage N15.</title>
        <authorList>
            <person name="Ravin V."/>
            <person name="Ravin N."/>
            <person name="Casjens S."/>
            <person name="Ford M.E."/>
            <person name="Hatfull G.F."/>
            <person name="Hendrix R.W."/>
        </authorList>
    </citation>
    <scope>NUCLEOTIDE SEQUENCE [LARGE SCALE GENOMIC DNA]</scope>
    <scope>IDENTIFICATION</scope>
</reference>
<protein>
    <recommendedName>
        <fullName evidence="2">Putative decoration protein</fullName>
    </recommendedName>
    <alternativeName>
        <fullName evidence="2">Gene product 7</fullName>
        <shortName>gp7</shortName>
    </alternativeName>
</protein>
<dbReference type="EMBL" id="AF064539">
    <property type="protein sequence ID" value="AAC19043.1"/>
    <property type="molecule type" value="Genomic_DNA"/>
</dbReference>
<dbReference type="PIR" id="T13093">
    <property type="entry name" value="T13093"/>
</dbReference>
<dbReference type="RefSeq" id="NP_046902.1">
    <property type="nucleotide sequence ID" value="NC_001901.1"/>
</dbReference>
<dbReference type="SMR" id="O64321"/>
<dbReference type="GeneID" id="1261646"/>
<dbReference type="KEGG" id="vg:1261646"/>
<dbReference type="Proteomes" id="UP000002132">
    <property type="component" value="Genome"/>
</dbReference>
<dbReference type="GO" id="GO:0098021">
    <property type="term" value="C:viral capsid, decoration"/>
    <property type="evidence" value="ECO:0007669"/>
    <property type="project" value="UniProtKB-KW"/>
</dbReference>
<dbReference type="Gene3D" id="2.40.300.10">
    <property type="entry name" value="Head decoration protein D"/>
    <property type="match status" value="1"/>
</dbReference>
<dbReference type="InterPro" id="IPR004195">
    <property type="entry name" value="Head_decoration_D"/>
</dbReference>
<dbReference type="InterPro" id="IPR036630">
    <property type="entry name" value="Head_decoration_D_sf"/>
</dbReference>
<dbReference type="Pfam" id="PF02924">
    <property type="entry name" value="HDPD"/>
    <property type="match status" value="1"/>
</dbReference>
<dbReference type="SUPFAM" id="SSF51274">
    <property type="entry name" value="Head decoration protein D (gpD, major capsid protein D)"/>
    <property type="match status" value="1"/>
</dbReference>
<organism evidence="4">
    <name type="scientific">Escherichia phage N15</name>
    <name type="common">Bacteriophage N15</name>
    <dbReference type="NCBI Taxonomy" id="1604876"/>
    <lineage>
        <taxon>Viruses</taxon>
        <taxon>Duplodnaviria</taxon>
        <taxon>Heunggongvirae</taxon>
        <taxon>Uroviricota</taxon>
        <taxon>Caudoviricetes</taxon>
        <taxon>Ravinvirus</taxon>
        <taxon>Ravinvirus N15</taxon>
    </lineage>
</organism>
<feature type="chain" id="PRO_0000432350" description="Putative decoration protein">
    <location>
        <begin position="1"/>
        <end position="110"/>
    </location>
</feature>
<feature type="region of interest" description="Disordered" evidence="1">
    <location>
        <begin position="1"/>
        <end position="27"/>
    </location>
</feature>
<name>DECO7_BPN15</name>
<comment type="function">
    <text evidence="2">Putative decoration protein.</text>
</comment>
<comment type="subcellular location">
    <subcellularLocation>
        <location evidence="2">Virion</location>
    </subcellularLocation>
</comment>